<protein>
    <recommendedName>
        <fullName>Tetraacyldisaccharide 4'-kinase</fullName>
        <ecNumber>2.7.1.130</ecNumber>
    </recommendedName>
    <alternativeName>
        <fullName>Lipid A 4'-kinase</fullName>
    </alternativeName>
</protein>
<gene>
    <name type="primary">lpxK</name>
    <name type="ordered locus">Neut_2110</name>
</gene>
<comment type="function">
    <text evidence="1">Transfers the gamma-phosphate of ATP to the 4'-position of a tetraacyldisaccharide 1-phosphate intermediate (termed DS-1-P) to form tetraacyldisaccharide 1,4'-bis-phosphate (lipid IVA).</text>
</comment>
<comment type="catalytic activity">
    <reaction>
        <text>a lipid A disaccharide + ATP = a lipid IVA + ADP + H(+)</text>
        <dbReference type="Rhea" id="RHEA:67840"/>
        <dbReference type="ChEBI" id="CHEBI:15378"/>
        <dbReference type="ChEBI" id="CHEBI:30616"/>
        <dbReference type="ChEBI" id="CHEBI:176343"/>
        <dbReference type="ChEBI" id="CHEBI:176425"/>
        <dbReference type="ChEBI" id="CHEBI:456216"/>
        <dbReference type="EC" id="2.7.1.130"/>
    </reaction>
</comment>
<comment type="pathway">
    <text>Glycolipid biosynthesis; lipid IV(A) biosynthesis; lipid IV(A) from (3R)-3-hydroxytetradecanoyl-[acyl-carrier-protein] and UDP-N-acetyl-alpha-D-glucosamine: step 6/6.</text>
</comment>
<comment type="similarity">
    <text evidence="2">In the N-terminal section; belongs to the LpxK family.</text>
</comment>
<comment type="similarity">
    <text evidence="2">In the C-terminal section; belongs to the UPF0434 family.</text>
</comment>
<comment type="caution">
    <text evidence="2">Lacks the conserved motif Gly-Gly-x-Gly-Lys-Thr that is the consensus ATP-binding site for this enzyme.</text>
</comment>
<reference key="1">
    <citation type="journal article" date="2007" name="Environ. Microbiol.">
        <title>Whole-genome analysis of the ammonia-oxidizing bacterium, Nitrosomonas eutropha C91: implications for niche adaptation.</title>
        <authorList>
            <person name="Stein L.Y."/>
            <person name="Arp D.J."/>
            <person name="Berube P.M."/>
            <person name="Chain P.S."/>
            <person name="Hauser L."/>
            <person name="Jetten M.S."/>
            <person name="Klotz M.G."/>
            <person name="Larimer F.W."/>
            <person name="Norton J.M."/>
            <person name="Op den Camp H.J.M."/>
            <person name="Shin M."/>
            <person name="Wei X."/>
        </authorList>
    </citation>
    <scope>NUCLEOTIDE SEQUENCE [LARGE SCALE GENOMIC DNA]</scope>
    <source>
        <strain>DSM 101675 / C91 / Nm57</strain>
    </source>
</reference>
<organism>
    <name type="scientific">Nitrosomonas eutropha (strain DSM 101675 / C91 / Nm57)</name>
    <dbReference type="NCBI Taxonomy" id="335283"/>
    <lineage>
        <taxon>Bacteria</taxon>
        <taxon>Pseudomonadati</taxon>
        <taxon>Pseudomonadota</taxon>
        <taxon>Betaproteobacteria</taxon>
        <taxon>Nitrosomonadales</taxon>
        <taxon>Nitrosomonadaceae</taxon>
        <taxon>Nitrosomonas</taxon>
    </lineage>
</organism>
<evidence type="ECO:0000250" key="1"/>
<evidence type="ECO:0000305" key="2"/>
<dbReference type="EC" id="2.7.1.130"/>
<dbReference type="EMBL" id="CP000450">
    <property type="protein sequence ID" value="ABI60332.1"/>
    <property type="molecule type" value="Genomic_DNA"/>
</dbReference>
<dbReference type="SMR" id="Q0AEA0"/>
<dbReference type="STRING" id="335283.Neut_2110"/>
<dbReference type="KEGG" id="net:Neut_2110"/>
<dbReference type="eggNOG" id="COG1663">
    <property type="taxonomic scope" value="Bacteria"/>
</dbReference>
<dbReference type="eggNOG" id="COG2835">
    <property type="taxonomic scope" value="Bacteria"/>
</dbReference>
<dbReference type="HOGENOM" id="CLU_038816_2_0_4"/>
<dbReference type="OrthoDB" id="9766423at2"/>
<dbReference type="UniPathway" id="UPA00359">
    <property type="reaction ID" value="UER00482"/>
</dbReference>
<dbReference type="Proteomes" id="UP000001966">
    <property type="component" value="Chromosome"/>
</dbReference>
<dbReference type="GO" id="GO:0005886">
    <property type="term" value="C:plasma membrane"/>
    <property type="evidence" value="ECO:0007669"/>
    <property type="project" value="TreeGrafter"/>
</dbReference>
<dbReference type="GO" id="GO:0005524">
    <property type="term" value="F:ATP binding"/>
    <property type="evidence" value="ECO:0007669"/>
    <property type="project" value="UniProtKB-UniRule"/>
</dbReference>
<dbReference type="GO" id="GO:0009029">
    <property type="term" value="F:tetraacyldisaccharide 4'-kinase activity"/>
    <property type="evidence" value="ECO:0007669"/>
    <property type="project" value="UniProtKB-UniRule"/>
</dbReference>
<dbReference type="GO" id="GO:0009245">
    <property type="term" value="P:lipid A biosynthetic process"/>
    <property type="evidence" value="ECO:0007669"/>
    <property type="project" value="UniProtKB-UniRule"/>
</dbReference>
<dbReference type="GO" id="GO:0009244">
    <property type="term" value="P:lipopolysaccharide core region biosynthetic process"/>
    <property type="evidence" value="ECO:0007669"/>
    <property type="project" value="TreeGrafter"/>
</dbReference>
<dbReference type="FunFam" id="2.20.25.10:FF:000002">
    <property type="entry name" value="UPF0434 protein YcaR"/>
    <property type="match status" value="1"/>
</dbReference>
<dbReference type="Gene3D" id="2.20.25.10">
    <property type="match status" value="1"/>
</dbReference>
<dbReference type="HAMAP" id="MF_00409">
    <property type="entry name" value="LpxK"/>
    <property type="match status" value="1"/>
</dbReference>
<dbReference type="HAMAP" id="MF_01187">
    <property type="entry name" value="UPF0434"/>
    <property type="match status" value="1"/>
</dbReference>
<dbReference type="InterPro" id="IPR003758">
    <property type="entry name" value="LpxK"/>
</dbReference>
<dbReference type="InterPro" id="IPR005651">
    <property type="entry name" value="Trm112-like"/>
</dbReference>
<dbReference type="NCBIfam" id="TIGR00682">
    <property type="entry name" value="lpxK"/>
    <property type="match status" value="1"/>
</dbReference>
<dbReference type="PANTHER" id="PTHR42724">
    <property type="entry name" value="TETRAACYLDISACCHARIDE 4'-KINASE"/>
    <property type="match status" value="1"/>
</dbReference>
<dbReference type="PANTHER" id="PTHR42724:SF1">
    <property type="entry name" value="TETRAACYLDISACCHARIDE 4'-KINASE, MITOCHONDRIAL-RELATED"/>
    <property type="match status" value="1"/>
</dbReference>
<dbReference type="Pfam" id="PF02606">
    <property type="entry name" value="LpxK"/>
    <property type="match status" value="1"/>
</dbReference>
<dbReference type="Pfam" id="PF03966">
    <property type="entry name" value="Trm112p"/>
    <property type="match status" value="1"/>
</dbReference>
<dbReference type="SUPFAM" id="SSF158997">
    <property type="entry name" value="Trm112p-like"/>
    <property type="match status" value="1"/>
</dbReference>
<name>LPXK_NITEC</name>
<keyword id="KW-0067">ATP-binding</keyword>
<keyword id="KW-0418">Kinase</keyword>
<keyword id="KW-0441">Lipid A biosynthesis</keyword>
<keyword id="KW-0444">Lipid biosynthesis</keyword>
<keyword id="KW-0443">Lipid metabolism</keyword>
<keyword id="KW-0547">Nucleotide-binding</keyword>
<keyword id="KW-0808">Transferase</keyword>
<sequence>MNWSELYWQRITPLHLLLWPVSLLFVLFQSIRRHLYRRAILTSVHLPVPVIVVDSITATSPVKTPLIIQIVNMLRASGLRPGIIGHGYTDNYHSPMSVTIDSPLQLAGKKSLLLAYYLRETCPVWIGHDRIEVAKALLETHKECNVLICNDGLQDLRLQRDFEVVIVDTSVINSGNGLIMPAGPLRDSFARLKHSNVVVQAGHHRQIPDIGEEIRTFYITPLKEHFFNLSRPELTASAAELANKRIHAVTCDPDIQNFLDNLKFLRLTVTPYIFSEDHHFVAEDFPFDEAEIILIPEEDAVKCFNLHDERIWVLQQEYRVDLGLRTIILKKLREKFMDPKLLDILACPLCKGPLIYKKDRLELICKADRLAYPIRDGIPVMLEDEARRLPDEEEIK</sequence>
<feature type="chain" id="PRO_0000291219" description="Tetraacyldisaccharide 4'-kinase">
    <location>
        <begin position="1"/>
        <end position="396"/>
    </location>
</feature>
<feature type="region of interest" description="Tetraacyldisaccharide 4'-kinase">
    <location>
        <begin position="1"/>
        <end position="336"/>
    </location>
</feature>
<feature type="region of interest" description="UPF0434">
    <location>
        <begin position="337"/>
        <end position="396"/>
    </location>
</feature>
<accession>Q0AEA0</accession>
<proteinExistence type="inferred from homology"/>